<sequence length="279" mass="30650">MGIKKFKPVTSASRYKSVLDFAEITETEPYKPLTLTLNYKAGRGDGGKIAVRHKGGRVKRKYRIIDFKRRKANIPAVVKSLEYDPNRSAFISLICYKDGEYSYILAPDGIKVGDTVQSGAGSEIKIGNAMPIGKIPPGTNVHNVELQIGKGGQIARTAGSFGTIAGRDGEYILLKLPSSEVRKVHENCYATIGICSNKDHNLVSIGKAGRSRWLGKRPSVRGVVMNPVDHPHGGGEGRTSGGRHPVSPWGQPTKGYKTRRSTRPSDKFIIQKRKRNRNR</sequence>
<accession>Q72NG4</accession>
<dbReference type="EMBL" id="AE016823">
    <property type="protein sequence ID" value="AAS71423.1"/>
    <property type="molecule type" value="Genomic_DNA"/>
</dbReference>
<dbReference type="RefSeq" id="WP_000511542.1">
    <property type="nucleotide sequence ID" value="NC_005823.1"/>
</dbReference>
<dbReference type="SMR" id="Q72NG4"/>
<dbReference type="GeneID" id="61142744"/>
<dbReference type="KEGG" id="lic:LIC_12870"/>
<dbReference type="HOGENOM" id="CLU_036235_2_1_12"/>
<dbReference type="Proteomes" id="UP000007037">
    <property type="component" value="Chromosome I"/>
</dbReference>
<dbReference type="GO" id="GO:0015934">
    <property type="term" value="C:large ribosomal subunit"/>
    <property type="evidence" value="ECO:0007669"/>
    <property type="project" value="InterPro"/>
</dbReference>
<dbReference type="GO" id="GO:0019843">
    <property type="term" value="F:rRNA binding"/>
    <property type="evidence" value="ECO:0007669"/>
    <property type="project" value="UniProtKB-UniRule"/>
</dbReference>
<dbReference type="GO" id="GO:0003735">
    <property type="term" value="F:structural constituent of ribosome"/>
    <property type="evidence" value="ECO:0007669"/>
    <property type="project" value="InterPro"/>
</dbReference>
<dbReference type="GO" id="GO:0016740">
    <property type="term" value="F:transferase activity"/>
    <property type="evidence" value="ECO:0007669"/>
    <property type="project" value="InterPro"/>
</dbReference>
<dbReference type="GO" id="GO:0002181">
    <property type="term" value="P:cytoplasmic translation"/>
    <property type="evidence" value="ECO:0007669"/>
    <property type="project" value="TreeGrafter"/>
</dbReference>
<dbReference type="FunFam" id="2.30.30.30:FF:000001">
    <property type="entry name" value="50S ribosomal protein L2"/>
    <property type="match status" value="1"/>
</dbReference>
<dbReference type="FunFam" id="2.40.50.140:FF:000003">
    <property type="entry name" value="50S ribosomal protein L2"/>
    <property type="match status" value="1"/>
</dbReference>
<dbReference type="FunFam" id="4.10.950.10:FF:000001">
    <property type="entry name" value="50S ribosomal protein L2"/>
    <property type="match status" value="1"/>
</dbReference>
<dbReference type="Gene3D" id="2.30.30.30">
    <property type="match status" value="1"/>
</dbReference>
<dbReference type="Gene3D" id="2.40.50.140">
    <property type="entry name" value="Nucleic acid-binding proteins"/>
    <property type="match status" value="1"/>
</dbReference>
<dbReference type="Gene3D" id="4.10.950.10">
    <property type="entry name" value="Ribosomal protein L2, domain 3"/>
    <property type="match status" value="1"/>
</dbReference>
<dbReference type="HAMAP" id="MF_01320_B">
    <property type="entry name" value="Ribosomal_uL2_B"/>
    <property type="match status" value="1"/>
</dbReference>
<dbReference type="InterPro" id="IPR012340">
    <property type="entry name" value="NA-bd_OB-fold"/>
</dbReference>
<dbReference type="InterPro" id="IPR014722">
    <property type="entry name" value="Rib_uL2_dom2"/>
</dbReference>
<dbReference type="InterPro" id="IPR002171">
    <property type="entry name" value="Ribosomal_uL2"/>
</dbReference>
<dbReference type="InterPro" id="IPR005880">
    <property type="entry name" value="Ribosomal_uL2_bac/org-type"/>
</dbReference>
<dbReference type="InterPro" id="IPR022669">
    <property type="entry name" value="Ribosomal_uL2_C"/>
</dbReference>
<dbReference type="InterPro" id="IPR022671">
    <property type="entry name" value="Ribosomal_uL2_CS"/>
</dbReference>
<dbReference type="InterPro" id="IPR014726">
    <property type="entry name" value="Ribosomal_uL2_dom3"/>
</dbReference>
<dbReference type="InterPro" id="IPR022666">
    <property type="entry name" value="Ribosomal_uL2_RNA-bd_dom"/>
</dbReference>
<dbReference type="InterPro" id="IPR008991">
    <property type="entry name" value="Translation_prot_SH3-like_sf"/>
</dbReference>
<dbReference type="NCBIfam" id="TIGR01171">
    <property type="entry name" value="rplB_bact"/>
    <property type="match status" value="1"/>
</dbReference>
<dbReference type="PANTHER" id="PTHR13691:SF5">
    <property type="entry name" value="LARGE RIBOSOMAL SUBUNIT PROTEIN UL2M"/>
    <property type="match status" value="1"/>
</dbReference>
<dbReference type="PANTHER" id="PTHR13691">
    <property type="entry name" value="RIBOSOMAL PROTEIN L2"/>
    <property type="match status" value="1"/>
</dbReference>
<dbReference type="Pfam" id="PF00181">
    <property type="entry name" value="Ribosomal_L2"/>
    <property type="match status" value="1"/>
</dbReference>
<dbReference type="Pfam" id="PF03947">
    <property type="entry name" value="Ribosomal_L2_C"/>
    <property type="match status" value="1"/>
</dbReference>
<dbReference type="PIRSF" id="PIRSF002158">
    <property type="entry name" value="Ribosomal_L2"/>
    <property type="match status" value="1"/>
</dbReference>
<dbReference type="SMART" id="SM01383">
    <property type="entry name" value="Ribosomal_L2"/>
    <property type="match status" value="1"/>
</dbReference>
<dbReference type="SMART" id="SM01382">
    <property type="entry name" value="Ribosomal_L2_C"/>
    <property type="match status" value="1"/>
</dbReference>
<dbReference type="SUPFAM" id="SSF50249">
    <property type="entry name" value="Nucleic acid-binding proteins"/>
    <property type="match status" value="1"/>
</dbReference>
<dbReference type="SUPFAM" id="SSF50104">
    <property type="entry name" value="Translation proteins SH3-like domain"/>
    <property type="match status" value="1"/>
</dbReference>
<dbReference type="PROSITE" id="PS00467">
    <property type="entry name" value="RIBOSOMAL_L2"/>
    <property type="match status" value="1"/>
</dbReference>
<feature type="chain" id="PRO_0000129573" description="Large ribosomal subunit protein uL2">
    <location>
        <begin position="1"/>
        <end position="279"/>
    </location>
</feature>
<feature type="region of interest" description="Disordered" evidence="2">
    <location>
        <begin position="216"/>
        <end position="279"/>
    </location>
</feature>
<feature type="compositionally biased region" description="Basic residues" evidence="2">
    <location>
        <begin position="270"/>
        <end position="279"/>
    </location>
</feature>
<gene>
    <name evidence="1" type="primary">rplB</name>
    <name type="ordered locus">LIC_12870</name>
</gene>
<evidence type="ECO:0000255" key="1">
    <source>
        <dbReference type="HAMAP-Rule" id="MF_01320"/>
    </source>
</evidence>
<evidence type="ECO:0000256" key="2">
    <source>
        <dbReference type="SAM" id="MobiDB-lite"/>
    </source>
</evidence>
<evidence type="ECO:0000305" key="3"/>
<protein>
    <recommendedName>
        <fullName evidence="1">Large ribosomal subunit protein uL2</fullName>
    </recommendedName>
    <alternativeName>
        <fullName evidence="3">50S ribosomal protein L2</fullName>
    </alternativeName>
</protein>
<organism>
    <name type="scientific">Leptospira interrogans serogroup Icterohaemorrhagiae serovar copenhageni (strain Fiocruz L1-130)</name>
    <dbReference type="NCBI Taxonomy" id="267671"/>
    <lineage>
        <taxon>Bacteria</taxon>
        <taxon>Pseudomonadati</taxon>
        <taxon>Spirochaetota</taxon>
        <taxon>Spirochaetia</taxon>
        <taxon>Leptospirales</taxon>
        <taxon>Leptospiraceae</taxon>
        <taxon>Leptospira</taxon>
    </lineage>
</organism>
<name>RL2_LEPIC</name>
<proteinExistence type="inferred from homology"/>
<comment type="function">
    <text evidence="1">One of the primary rRNA binding proteins. Required for association of the 30S and 50S subunits to form the 70S ribosome, for tRNA binding and peptide bond formation. It has been suggested to have peptidyltransferase activity; this is somewhat controversial. Makes several contacts with the 16S rRNA in the 70S ribosome.</text>
</comment>
<comment type="subunit">
    <text evidence="1">Part of the 50S ribosomal subunit. Forms a bridge to the 30S subunit in the 70S ribosome.</text>
</comment>
<comment type="similarity">
    <text evidence="1">Belongs to the universal ribosomal protein uL2 family.</text>
</comment>
<reference key="1">
    <citation type="journal article" date="2004" name="J. Bacteriol.">
        <title>Comparative genomics of two Leptospira interrogans serovars reveals novel insights into physiology and pathogenesis.</title>
        <authorList>
            <person name="Nascimento A.L.T.O."/>
            <person name="Ko A.I."/>
            <person name="Martins E.A.L."/>
            <person name="Monteiro-Vitorello C.B."/>
            <person name="Ho P.L."/>
            <person name="Haake D.A."/>
            <person name="Verjovski-Almeida S."/>
            <person name="Hartskeerl R.A."/>
            <person name="Marques M.V."/>
            <person name="Oliveira M.C."/>
            <person name="Menck C.F.M."/>
            <person name="Leite L.C.C."/>
            <person name="Carrer H."/>
            <person name="Coutinho L.L."/>
            <person name="Degrave W.M."/>
            <person name="Dellagostin O.A."/>
            <person name="El-Dorry H."/>
            <person name="Ferro E.S."/>
            <person name="Ferro M.I.T."/>
            <person name="Furlan L.R."/>
            <person name="Gamberini M."/>
            <person name="Giglioti E.A."/>
            <person name="Goes-Neto A."/>
            <person name="Goldman G.H."/>
            <person name="Goldman M.H.S."/>
            <person name="Harakava R."/>
            <person name="Jeronimo S.M.B."/>
            <person name="Junqueira-de-Azevedo I.L.M."/>
            <person name="Kimura E.T."/>
            <person name="Kuramae E.E."/>
            <person name="Lemos E.G.M."/>
            <person name="Lemos M.V.F."/>
            <person name="Marino C.L."/>
            <person name="Nunes L.R."/>
            <person name="de Oliveira R.C."/>
            <person name="Pereira G.G."/>
            <person name="Reis M.S."/>
            <person name="Schriefer A."/>
            <person name="Siqueira W.J."/>
            <person name="Sommer P."/>
            <person name="Tsai S.M."/>
            <person name="Simpson A.J.G."/>
            <person name="Ferro J.A."/>
            <person name="Camargo L.E.A."/>
            <person name="Kitajima J.P."/>
            <person name="Setubal J.C."/>
            <person name="Van Sluys M.A."/>
        </authorList>
    </citation>
    <scope>NUCLEOTIDE SEQUENCE [LARGE SCALE GENOMIC DNA]</scope>
    <source>
        <strain>Fiocruz L1-130</strain>
    </source>
</reference>
<keyword id="KW-0687">Ribonucleoprotein</keyword>
<keyword id="KW-0689">Ribosomal protein</keyword>
<keyword id="KW-0694">RNA-binding</keyword>
<keyword id="KW-0699">rRNA-binding</keyword>